<comment type="similarity">
    <text evidence="1">Belongs to the universal ribosomal protein uS2 family.</text>
</comment>
<accession>Q5WVY7</accession>
<reference key="1">
    <citation type="journal article" date="2004" name="Nat. Genet.">
        <title>Evidence in the Legionella pneumophila genome for exploitation of host cell functions and high genome plasticity.</title>
        <authorList>
            <person name="Cazalet C."/>
            <person name="Rusniok C."/>
            <person name="Brueggemann H."/>
            <person name="Zidane N."/>
            <person name="Magnier A."/>
            <person name="Ma L."/>
            <person name="Tichit M."/>
            <person name="Jarraud S."/>
            <person name="Bouchier C."/>
            <person name="Vandenesch F."/>
            <person name="Kunst F."/>
            <person name="Etienne J."/>
            <person name="Glaser P."/>
            <person name="Buchrieser C."/>
        </authorList>
    </citation>
    <scope>NUCLEOTIDE SEQUENCE [LARGE SCALE GENOMIC DNA]</scope>
    <source>
        <strain>Lens</strain>
    </source>
</reference>
<sequence length="254" mass="28751">MNNVSMRELLEAGAHFGHRTRFWNPKMSEYIFGSRNKIHIINLEKTLPMLSDVTNYVSRLAANKAKILFVGTKRAAQDSIREHARRCGMPYVDHRWLGGMLTNYKTVRQSIFRLKELKEMKEKGLFNDMIKKEALMLTRELEKLERSLGGIENMGGLPDALFVVDVGFEHIAVEEARRLRIPVIGVVDTNNSPDNIDYVIPGNDDSMRAVDIYVRCVADAILDGKNSNTVGRVSSDSEFVEVTSNSNEEEKSGE</sequence>
<dbReference type="EMBL" id="CR628337">
    <property type="protein sequence ID" value="CAH15913.1"/>
    <property type="molecule type" value="Genomic_DNA"/>
</dbReference>
<dbReference type="RefSeq" id="WP_011215692.1">
    <property type="nucleotide sequence ID" value="NC_006369.1"/>
</dbReference>
<dbReference type="SMR" id="Q5WVY7"/>
<dbReference type="KEGG" id="lpf:lpl1673"/>
<dbReference type="LegioList" id="lpl1673"/>
<dbReference type="HOGENOM" id="CLU_040318_1_2_6"/>
<dbReference type="Proteomes" id="UP000002517">
    <property type="component" value="Chromosome"/>
</dbReference>
<dbReference type="GO" id="GO:0022627">
    <property type="term" value="C:cytosolic small ribosomal subunit"/>
    <property type="evidence" value="ECO:0007669"/>
    <property type="project" value="TreeGrafter"/>
</dbReference>
<dbReference type="GO" id="GO:0003735">
    <property type="term" value="F:structural constituent of ribosome"/>
    <property type="evidence" value="ECO:0007669"/>
    <property type="project" value="InterPro"/>
</dbReference>
<dbReference type="GO" id="GO:0006412">
    <property type="term" value="P:translation"/>
    <property type="evidence" value="ECO:0007669"/>
    <property type="project" value="UniProtKB-UniRule"/>
</dbReference>
<dbReference type="CDD" id="cd01425">
    <property type="entry name" value="RPS2"/>
    <property type="match status" value="1"/>
</dbReference>
<dbReference type="FunFam" id="1.10.287.610:FF:000001">
    <property type="entry name" value="30S ribosomal protein S2"/>
    <property type="match status" value="1"/>
</dbReference>
<dbReference type="Gene3D" id="3.40.50.10490">
    <property type="entry name" value="Glucose-6-phosphate isomerase like protein, domain 1"/>
    <property type="match status" value="1"/>
</dbReference>
<dbReference type="Gene3D" id="1.10.287.610">
    <property type="entry name" value="Helix hairpin bin"/>
    <property type="match status" value="1"/>
</dbReference>
<dbReference type="HAMAP" id="MF_00291_B">
    <property type="entry name" value="Ribosomal_uS2_B"/>
    <property type="match status" value="1"/>
</dbReference>
<dbReference type="InterPro" id="IPR001865">
    <property type="entry name" value="Ribosomal_uS2"/>
</dbReference>
<dbReference type="InterPro" id="IPR005706">
    <property type="entry name" value="Ribosomal_uS2_bac/mit/plastid"/>
</dbReference>
<dbReference type="InterPro" id="IPR018130">
    <property type="entry name" value="Ribosomal_uS2_CS"/>
</dbReference>
<dbReference type="InterPro" id="IPR023591">
    <property type="entry name" value="Ribosomal_uS2_flav_dom_sf"/>
</dbReference>
<dbReference type="NCBIfam" id="TIGR01011">
    <property type="entry name" value="rpsB_bact"/>
    <property type="match status" value="1"/>
</dbReference>
<dbReference type="PANTHER" id="PTHR12534">
    <property type="entry name" value="30S RIBOSOMAL PROTEIN S2 PROKARYOTIC AND ORGANELLAR"/>
    <property type="match status" value="1"/>
</dbReference>
<dbReference type="PANTHER" id="PTHR12534:SF0">
    <property type="entry name" value="SMALL RIBOSOMAL SUBUNIT PROTEIN US2M"/>
    <property type="match status" value="1"/>
</dbReference>
<dbReference type="Pfam" id="PF00318">
    <property type="entry name" value="Ribosomal_S2"/>
    <property type="match status" value="1"/>
</dbReference>
<dbReference type="PRINTS" id="PR00395">
    <property type="entry name" value="RIBOSOMALS2"/>
</dbReference>
<dbReference type="SUPFAM" id="SSF52313">
    <property type="entry name" value="Ribosomal protein S2"/>
    <property type="match status" value="1"/>
</dbReference>
<dbReference type="PROSITE" id="PS00962">
    <property type="entry name" value="RIBOSOMAL_S2_1"/>
    <property type="match status" value="1"/>
</dbReference>
<dbReference type="PROSITE" id="PS00963">
    <property type="entry name" value="RIBOSOMAL_S2_2"/>
    <property type="match status" value="1"/>
</dbReference>
<organism>
    <name type="scientific">Legionella pneumophila (strain Lens)</name>
    <dbReference type="NCBI Taxonomy" id="297245"/>
    <lineage>
        <taxon>Bacteria</taxon>
        <taxon>Pseudomonadati</taxon>
        <taxon>Pseudomonadota</taxon>
        <taxon>Gammaproteobacteria</taxon>
        <taxon>Legionellales</taxon>
        <taxon>Legionellaceae</taxon>
        <taxon>Legionella</taxon>
    </lineage>
</organism>
<keyword id="KW-0687">Ribonucleoprotein</keyword>
<keyword id="KW-0689">Ribosomal protein</keyword>
<name>RS2_LEGPL</name>
<feature type="chain" id="PRO_0000134186" description="Small ribosomal subunit protein uS2">
    <location>
        <begin position="1"/>
        <end position="254"/>
    </location>
</feature>
<protein>
    <recommendedName>
        <fullName evidence="1">Small ribosomal subunit protein uS2</fullName>
    </recommendedName>
    <alternativeName>
        <fullName evidence="2">30S ribosomal protein S2</fullName>
    </alternativeName>
</protein>
<evidence type="ECO:0000255" key="1">
    <source>
        <dbReference type="HAMAP-Rule" id="MF_00291"/>
    </source>
</evidence>
<evidence type="ECO:0000305" key="2"/>
<gene>
    <name evidence="1" type="primary">rpsB</name>
    <name type="ordered locus">lpl1673</name>
</gene>
<proteinExistence type="inferred from homology"/>